<comment type="function">
    <text evidence="1">Component of the acetyl coenzyme A carboxylase (ACC) complex. First, biotin carboxylase catalyzes the carboxylation of biotin on its carrier protein (BCCP) and then the CO(2) group is transferred by the carboxyltransferase to acetyl-CoA to form malonyl-CoA.</text>
</comment>
<comment type="catalytic activity">
    <reaction evidence="1">
        <text>N(6)-carboxybiotinyl-L-lysyl-[protein] + acetyl-CoA = N(6)-biotinyl-L-lysyl-[protein] + malonyl-CoA</text>
        <dbReference type="Rhea" id="RHEA:54728"/>
        <dbReference type="Rhea" id="RHEA-COMP:10505"/>
        <dbReference type="Rhea" id="RHEA-COMP:10506"/>
        <dbReference type="ChEBI" id="CHEBI:57288"/>
        <dbReference type="ChEBI" id="CHEBI:57384"/>
        <dbReference type="ChEBI" id="CHEBI:83144"/>
        <dbReference type="ChEBI" id="CHEBI:83145"/>
        <dbReference type="EC" id="2.1.3.15"/>
    </reaction>
</comment>
<comment type="pathway">
    <text evidence="1">Lipid metabolism; malonyl-CoA biosynthesis; malonyl-CoA from acetyl-CoA: step 1/1.</text>
</comment>
<comment type="subunit">
    <text evidence="1">Acetyl-CoA carboxylase is a heterohexamer composed of biotin carboxyl carrier protein (AccB), biotin carboxylase (AccC) and two subunits each of ACCase subunit alpha (AccA) and ACCase subunit beta (AccD).</text>
</comment>
<comment type="subcellular location">
    <subcellularLocation>
        <location evidence="1">Cytoplasm</location>
    </subcellularLocation>
</comment>
<comment type="similarity">
    <text evidence="1">Belongs to the AccA family.</text>
</comment>
<keyword id="KW-0067">ATP-binding</keyword>
<keyword id="KW-0963">Cytoplasm</keyword>
<keyword id="KW-0275">Fatty acid biosynthesis</keyword>
<keyword id="KW-0276">Fatty acid metabolism</keyword>
<keyword id="KW-0444">Lipid biosynthesis</keyword>
<keyword id="KW-0443">Lipid metabolism</keyword>
<keyword id="KW-0547">Nucleotide-binding</keyword>
<keyword id="KW-1185">Reference proteome</keyword>
<keyword id="KW-0808">Transferase</keyword>
<evidence type="ECO:0000255" key="1">
    <source>
        <dbReference type="HAMAP-Rule" id="MF_00823"/>
    </source>
</evidence>
<evidence type="ECO:0000255" key="2">
    <source>
        <dbReference type="PROSITE-ProRule" id="PRU01137"/>
    </source>
</evidence>
<name>ACCA_XANP2</name>
<sequence length="317" mass="33744">MRSYLDFEKPVAELEAKVEELRALASAGDGVTITDEVQRLETKAREALLALYANLTPWQKTLVARHPQRPHFADFAKGLFEDFTPLAGDRKFGEDEAIIGGFARFRGEAVCVLGHEKGSTTETRIRHNFGMARPEGYRKAVRIMELADRFGIPLISLVDTAGAYPGIGAEERGQAEAIARSTDACLALGAPNVALVIGEGGSGGAIAIATANKVLMMEHAIYSVISPEGAASILWRDTAKAQEAATNMKITAQDLLKFGIIDAIVKEPPGGAHRDPEATIGAAGDAIADALSQLAGLDGPAVRKARRDKFLAIGRSL</sequence>
<accession>A7ICM4</accession>
<feature type="chain" id="PRO_1000134537" description="Acetyl-coenzyme A carboxylase carboxyl transferase subunit alpha">
    <location>
        <begin position="1"/>
        <end position="317"/>
    </location>
</feature>
<feature type="domain" description="CoA carboxyltransferase C-terminal" evidence="2">
    <location>
        <begin position="39"/>
        <end position="293"/>
    </location>
</feature>
<proteinExistence type="inferred from homology"/>
<gene>
    <name evidence="1" type="primary">accA</name>
    <name type="ordered locus">Xaut_0509</name>
</gene>
<organism>
    <name type="scientific">Xanthobacter autotrophicus (strain ATCC BAA-1158 / Py2)</name>
    <dbReference type="NCBI Taxonomy" id="78245"/>
    <lineage>
        <taxon>Bacteria</taxon>
        <taxon>Pseudomonadati</taxon>
        <taxon>Pseudomonadota</taxon>
        <taxon>Alphaproteobacteria</taxon>
        <taxon>Hyphomicrobiales</taxon>
        <taxon>Xanthobacteraceae</taxon>
        <taxon>Xanthobacter</taxon>
    </lineage>
</organism>
<dbReference type="EC" id="2.1.3.15" evidence="1"/>
<dbReference type="EMBL" id="CP000781">
    <property type="protein sequence ID" value="ABS65767.1"/>
    <property type="molecule type" value="Genomic_DNA"/>
</dbReference>
<dbReference type="SMR" id="A7ICM4"/>
<dbReference type="STRING" id="78245.Xaut_0509"/>
<dbReference type="KEGG" id="xau:Xaut_0509"/>
<dbReference type="eggNOG" id="COG0825">
    <property type="taxonomic scope" value="Bacteria"/>
</dbReference>
<dbReference type="HOGENOM" id="CLU_015486_0_2_5"/>
<dbReference type="OrthoDB" id="9808023at2"/>
<dbReference type="PhylomeDB" id="A7ICM4"/>
<dbReference type="UniPathway" id="UPA00655">
    <property type="reaction ID" value="UER00711"/>
</dbReference>
<dbReference type="Proteomes" id="UP000002417">
    <property type="component" value="Chromosome"/>
</dbReference>
<dbReference type="GO" id="GO:0009317">
    <property type="term" value="C:acetyl-CoA carboxylase complex"/>
    <property type="evidence" value="ECO:0007669"/>
    <property type="project" value="InterPro"/>
</dbReference>
<dbReference type="GO" id="GO:0003989">
    <property type="term" value="F:acetyl-CoA carboxylase activity"/>
    <property type="evidence" value="ECO:0007669"/>
    <property type="project" value="InterPro"/>
</dbReference>
<dbReference type="GO" id="GO:0005524">
    <property type="term" value="F:ATP binding"/>
    <property type="evidence" value="ECO:0007669"/>
    <property type="project" value="UniProtKB-KW"/>
</dbReference>
<dbReference type="GO" id="GO:0016743">
    <property type="term" value="F:carboxyl- or carbamoyltransferase activity"/>
    <property type="evidence" value="ECO:0007669"/>
    <property type="project" value="UniProtKB-UniRule"/>
</dbReference>
<dbReference type="GO" id="GO:0006633">
    <property type="term" value="P:fatty acid biosynthetic process"/>
    <property type="evidence" value="ECO:0007669"/>
    <property type="project" value="UniProtKB-KW"/>
</dbReference>
<dbReference type="GO" id="GO:2001295">
    <property type="term" value="P:malonyl-CoA biosynthetic process"/>
    <property type="evidence" value="ECO:0007669"/>
    <property type="project" value="UniProtKB-UniRule"/>
</dbReference>
<dbReference type="Gene3D" id="3.90.226.10">
    <property type="entry name" value="2-enoyl-CoA Hydratase, Chain A, domain 1"/>
    <property type="match status" value="1"/>
</dbReference>
<dbReference type="HAMAP" id="MF_00823">
    <property type="entry name" value="AcetylCoA_CT_alpha"/>
    <property type="match status" value="1"/>
</dbReference>
<dbReference type="InterPro" id="IPR001095">
    <property type="entry name" value="Acetyl_CoA_COase_a_su"/>
</dbReference>
<dbReference type="InterPro" id="IPR029045">
    <property type="entry name" value="ClpP/crotonase-like_dom_sf"/>
</dbReference>
<dbReference type="InterPro" id="IPR011763">
    <property type="entry name" value="COA_CT_C"/>
</dbReference>
<dbReference type="NCBIfam" id="TIGR00513">
    <property type="entry name" value="accA"/>
    <property type="match status" value="1"/>
</dbReference>
<dbReference type="NCBIfam" id="NF041504">
    <property type="entry name" value="AccA_sub"/>
    <property type="match status" value="1"/>
</dbReference>
<dbReference type="NCBIfam" id="NF004344">
    <property type="entry name" value="PRK05724.1"/>
    <property type="match status" value="1"/>
</dbReference>
<dbReference type="PANTHER" id="PTHR42853">
    <property type="entry name" value="ACETYL-COENZYME A CARBOXYLASE CARBOXYL TRANSFERASE SUBUNIT ALPHA"/>
    <property type="match status" value="1"/>
</dbReference>
<dbReference type="PANTHER" id="PTHR42853:SF3">
    <property type="entry name" value="ACETYL-COENZYME A CARBOXYLASE CARBOXYL TRANSFERASE SUBUNIT ALPHA, CHLOROPLASTIC"/>
    <property type="match status" value="1"/>
</dbReference>
<dbReference type="Pfam" id="PF03255">
    <property type="entry name" value="ACCA"/>
    <property type="match status" value="1"/>
</dbReference>
<dbReference type="PRINTS" id="PR01069">
    <property type="entry name" value="ACCCTRFRASEA"/>
</dbReference>
<dbReference type="SUPFAM" id="SSF52096">
    <property type="entry name" value="ClpP/crotonase"/>
    <property type="match status" value="1"/>
</dbReference>
<dbReference type="PROSITE" id="PS50989">
    <property type="entry name" value="COA_CT_CTER"/>
    <property type="match status" value="1"/>
</dbReference>
<reference key="1">
    <citation type="submission" date="2007-07" db="EMBL/GenBank/DDBJ databases">
        <title>Complete sequence of chromosome of Xanthobacter autotrophicus Py2.</title>
        <authorList>
            <consortium name="US DOE Joint Genome Institute"/>
            <person name="Copeland A."/>
            <person name="Lucas S."/>
            <person name="Lapidus A."/>
            <person name="Barry K."/>
            <person name="Glavina del Rio T."/>
            <person name="Hammon N."/>
            <person name="Israni S."/>
            <person name="Dalin E."/>
            <person name="Tice H."/>
            <person name="Pitluck S."/>
            <person name="Sims D."/>
            <person name="Brettin T."/>
            <person name="Bruce D."/>
            <person name="Detter J.C."/>
            <person name="Han C."/>
            <person name="Tapia R."/>
            <person name="Brainard J."/>
            <person name="Schmutz J."/>
            <person name="Larimer F."/>
            <person name="Land M."/>
            <person name="Hauser L."/>
            <person name="Kyrpides N."/>
            <person name="Kim E."/>
            <person name="Ensigns S.A."/>
            <person name="Richardson P."/>
        </authorList>
    </citation>
    <scope>NUCLEOTIDE SEQUENCE [LARGE SCALE GENOMIC DNA]</scope>
    <source>
        <strain>ATCC BAA-1158 / Py2</strain>
    </source>
</reference>
<protein>
    <recommendedName>
        <fullName evidence="1">Acetyl-coenzyme A carboxylase carboxyl transferase subunit alpha</fullName>
        <shortName evidence="1">ACCase subunit alpha</shortName>
        <shortName evidence="1">Acetyl-CoA carboxylase carboxyltransferase subunit alpha</shortName>
        <ecNumber evidence="1">2.1.3.15</ecNumber>
    </recommendedName>
</protein>